<sequence>MTRSVKKGPFIDAHLLKKVEAAVQTKDKKPIKTWSRRSTILPDFIGLTIAVHNGRQHVPVYVTENMVGHKLGEFALTRTFKGHAADKKAKR</sequence>
<name>RS19_RALPJ</name>
<organism>
    <name type="scientific">Ralstonia pickettii (strain 12J)</name>
    <dbReference type="NCBI Taxonomy" id="402626"/>
    <lineage>
        <taxon>Bacteria</taxon>
        <taxon>Pseudomonadati</taxon>
        <taxon>Pseudomonadota</taxon>
        <taxon>Betaproteobacteria</taxon>
        <taxon>Burkholderiales</taxon>
        <taxon>Burkholderiaceae</taxon>
        <taxon>Ralstonia</taxon>
    </lineage>
</organism>
<dbReference type="EMBL" id="CP001068">
    <property type="protein sequence ID" value="ACD28415.1"/>
    <property type="molecule type" value="Genomic_DNA"/>
</dbReference>
<dbReference type="SMR" id="B2UEL5"/>
<dbReference type="STRING" id="402626.Rpic_3293"/>
<dbReference type="KEGG" id="rpi:Rpic_3293"/>
<dbReference type="eggNOG" id="COG0185">
    <property type="taxonomic scope" value="Bacteria"/>
</dbReference>
<dbReference type="HOGENOM" id="CLU_144911_0_1_4"/>
<dbReference type="GO" id="GO:0005737">
    <property type="term" value="C:cytoplasm"/>
    <property type="evidence" value="ECO:0007669"/>
    <property type="project" value="UniProtKB-ARBA"/>
</dbReference>
<dbReference type="GO" id="GO:0015935">
    <property type="term" value="C:small ribosomal subunit"/>
    <property type="evidence" value="ECO:0007669"/>
    <property type="project" value="InterPro"/>
</dbReference>
<dbReference type="GO" id="GO:0019843">
    <property type="term" value="F:rRNA binding"/>
    <property type="evidence" value="ECO:0007669"/>
    <property type="project" value="UniProtKB-UniRule"/>
</dbReference>
<dbReference type="GO" id="GO:0003735">
    <property type="term" value="F:structural constituent of ribosome"/>
    <property type="evidence" value="ECO:0007669"/>
    <property type="project" value="InterPro"/>
</dbReference>
<dbReference type="GO" id="GO:0000028">
    <property type="term" value="P:ribosomal small subunit assembly"/>
    <property type="evidence" value="ECO:0007669"/>
    <property type="project" value="TreeGrafter"/>
</dbReference>
<dbReference type="GO" id="GO:0006412">
    <property type="term" value="P:translation"/>
    <property type="evidence" value="ECO:0007669"/>
    <property type="project" value="UniProtKB-UniRule"/>
</dbReference>
<dbReference type="FunFam" id="3.30.860.10:FF:000001">
    <property type="entry name" value="30S ribosomal protein S19"/>
    <property type="match status" value="1"/>
</dbReference>
<dbReference type="Gene3D" id="3.30.860.10">
    <property type="entry name" value="30s Ribosomal Protein S19, Chain A"/>
    <property type="match status" value="1"/>
</dbReference>
<dbReference type="HAMAP" id="MF_00531">
    <property type="entry name" value="Ribosomal_uS19"/>
    <property type="match status" value="1"/>
</dbReference>
<dbReference type="InterPro" id="IPR002222">
    <property type="entry name" value="Ribosomal_uS19"/>
</dbReference>
<dbReference type="InterPro" id="IPR005732">
    <property type="entry name" value="Ribosomal_uS19_bac-type"/>
</dbReference>
<dbReference type="InterPro" id="IPR020934">
    <property type="entry name" value="Ribosomal_uS19_CS"/>
</dbReference>
<dbReference type="InterPro" id="IPR023575">
    <property type="entry name" value="Ribosomal_uS19_SF"/>
</dbReference>
<dbReference type="NCBIfam" id="TIGR01050">
    <property type="entry name" value="rpsS_bact"/>
    <property type="match status" value="1"/>
</dbReference>
<dbReference type="PANTHER" id="PTHR11880">
    <property type="entry name" value="RIBOSOMAL PROTEIN S19P FAMILY MEMBER"/>
    <property type="match status" value="1"/>
</dbReference>
<dbReference type="PANTHER" id="PTHR11880:SF8">
    <property type="entry name" value="SMALL RIBOSOMAL SUBUNIT PROTEIN US19M"/>
    <property type="match status" value="1"/>
</dbReference>
<dbReference type="Pfam" id="PF00203">
    <property type="entry name" value="Ribosomal_S19"/>
    <property type="match status" value="1"/>
</dbReference>
<dbReference type="PIRSF" id="PIRSF002144">
    <property type="entry name" value="Ribosomal_S19"/>
    <property type="match status" value="1"/>
</dbReference>
<dbReference type="PRINTS" id="PR00975">
    <property type="entry name" value="RIBOSOMALS19"/>
</dbReference>
<dbReference type="SUPFAM" id="SSF54570">
    <property type="entry name" value="Ribosomal protein S19"/>
    <property type="match status" value="1"/>
</dbReference>
<dbReference type="PROSITE" id="PS00323">
    <property type="entry name" value="RIBOSOMAL_S19"/>
    <property type="match status" value="1"/>
</dbReference>
<protein>
    <recommendedName>
        <fullName evidence="1">Small ribosomal subunit protein uS19</fullName>
    </recommendedName>
    <alternativeName>
        <fullName evidence="2">30S ribosomal protein S19</fullName>
    </alternativeName>
</protein>
<proteinExistence type="inferred from homology"/>
<comment type="function">
    <text evidence="1">Protein S19 forms a complex with S13 that binds strongly to the 16S ribosomal RNA.</text>
</comment>
<comment type="similarity">
    <text evidence="1">Belongs to the universal ribosomal protein uS19 family.</text>
</comment>
<keyword id="KW-0687">Ribonucleoprotein</keyword>
<keyword id="KW-0689">Ribosomal protein</keyword>
<keyword id="KW-0694">RNA-binding</keyword>
<keyword id="KW-0699">rRNA-binding</keyword>
<feature type="chain" id="PRO_1000128023" description="Small ribosomal subunit protein uS19">
    <location>
        <begin position="1"/>
        <end position="91"/>
    </location>
</feature>
<evidence type="ECO:0000255" key="1">
    <source>
        <dbReference type="HAMAP-Rule" id="MF_00531"/>
    </source>
</evidence>
<evidence type="ECO:0000305" key="2"/>
<reference key="1">
    <citation type="submission" date="2008-05" db="EMBL/GenBank/DDBJ databases">
        <title>Complete sequence of chromosome 1 of Ralstonia pickettii 12J.</title>
        <authorList>
            <person name="Lucas S."/>
            <person name="Copeland A."/>
            <person name="Lapidus A."/>
            <person name="Glavina del Rio T."/>
            <person name="Dalin E."/>
            <person name="Tice H."/>
            <person name="Bruce D."/>
            <person name="Goodwin L."/>
            <person name="Pitluck S."/>
            <person name="Meincke L."/>
            <person name="Brettin T."/>
            <person name="Detter J.C."/>
            <person name="Han C."/>
            <person name="Kuske C.R."/>
            <person name="Schmutz J."/>
            <person name="Larimer F."/>
            <person name="Land M."/>
            <person name="Hauser L."/>
            <person name="Kyrpides N."/>
            <person name="Mikhailova N."/>
            <person name="Marsh T."/>
            <person name="Richardson P."/>
        </authorList>
    </citation>
    <scope>NUCLEOTIDE SEQUENCE [LARGE SCALE GENOMIC DNA]</scope>
    <source>
        <strain>12J</strain>
    </source>
</reference>
<gene>
    <name evidence="1" type="primary">rpsS</name>
    <name type="ordered locus">Rpic_3293</name>
</gene>
<accession>B2UEL5</accession>